<accession>Q6LA17</accession>
<evidence type="ECO:0000255" key="1">
    <source>
        <dbReference type="HAMAP-Rule" id="MF_01390"/>
    </source>
</evidence>
<organism>
    <name type="scientific">Bowiea volubilis</name>
    <name type="common">Climbing onion</name>
    <name type="synonym">Ophiobostryx volubilis</name>
    <dbReference type="NCBI Taxonomy" id="44987"/>
    <lineage>
        <taxon>Eukaryota</taxon>
        <taxon>Viridiplantae</taxon>
        <taxon>Streptophyta</taxon>
        <taxon>Embryophyta</taxon>
        <taxon>Tracheophyta</taxon>
        <taxon>Spermatophyta</taxon>
        <taxon>Magnoliopsida</taxon>
        <taxon>Liliopsida</taxon>
        <taxon>Asparagales</taxon>
        <taxon>Hyacinthaceae</taxon>
        <taxon>Urgineoideae</taxon>
        <taxon>Bowiea</taxon>
    </lineage>
</organism>
<proteinExistence type="inferred from homology"/>
<reference key="1">
    <citation type="journal article" date="2004" name="J. Plant Res.">
        <title>Molecular phylogeny of monocotyledons inferred from combined analysis of plastid matK and rbcL gene sequences.</title>
        <authorList>
            <person name="Tamura M.N."/>
            <person name="Yamashita J."/>
            <person name="Fuse S."/>
            <person name="Haraguchi M."/>
        </authorList>
    </citation>
    <scope>NUCLEOTIDE SEQUENCE [GENOMIC DNA]</scope>
</reference>
<keyword id="KW-0150">Chloroplast</keyword>
<keyword id="KW-0507">mRNA processing</keyword>
<keyword id="KW-0934">Plastid</keyword>
<keyword id="KW-0694">RNA-binding</keyword>
<keyword id="KW-0819">tRNA processing</keyword>
<sequence>MKEFQGYLEKDRSRQQHLLYPLLFQEYIYALAHDHGLNGSIFSEPVEVFGYDNKSSLALVKRLITRIYQQNYLIISVNDSNQNGFVGDNRFFYSHFYSQMISESFAIIVEIPFSPRLVSDFKEKEIPKYHNLRSIHSIFPFLEDKLSHLNYVSDILIPHPIHMEISVQILQCWIQDIPFLHSLRFFLHEYHNSNSLLVTQKKSIHVFLKENKRLFQFLYNSYVFECEFLLVFTRKQSSYLRLTSFGTFLERTLFYGKIEYFICRNYFHRTLWFFKEPFMHYVRYQGKAILASKGTHLMMKKWKYHFVNFWQYYFHFWTQPYRXHINQLSNSFFYFLGYLSXLLRNSSAVRNQMLENSFLIDTVTKKFDTIVPVIFLIGSLSKAKFCTVSGHPISKPIWADLSDSDILDRFGRICRNLSHYHSGSSKKQGLYQIKYILQLSCARTLARKHKSTVRTFLRRLGSELLEEFFMEEEQVLSLIFPQTTPFTLHGSHRERIWYLDIICINDLVNHS</sequence>
<comment type="function">
    <text evidence="1">Usually encoded in the trnK tRNA gene intron. Probably assists in splicing its own and other chloroplast group II introns.</text>
</comment>
<comment type="subcellular location">
    <subcellularLocation>
        <location>Plastid</location>
        <location>Chloroplast</location>
    </subcellularLocation>
</comment>
<comment type="similarity">
    <text evidence="1">Belongs to the intron maturase 2 family. MatK subfamily.</text>
</comment>
<name>MATK_BOWVO</name>
<geneLocation type="chloroplast"/>
<gene>
    <name evidence="1" type="primary">matK</name>
</gene>
<feature type="chain" id="PRO_0000143286" description="Maturase K">
    <location>
        <begin position="1"/>
        <end position="511"/>
    </location>
</feature>
<protein>
    <recommendedName>
        <fullName evidence="1">Maturase K</fullName>
    </recommendedName>
    <alternativeName>
        <fullName evidence="1">Intron maturase</fullName>
    </alternativeName>
</protein>
<dbReference type="EMBL" id="AB088790">
    <property type="protein sequence ID" value="BAD20584.1"/>
    <property type="molecule type" value="Genomic_DNA"/>
</dbReference>
<dbReference type="GO" id="GO:0009507">
    <property type="term" value="C:chloroplast"/>
    <property type="evidence" value="ECO:0007669"/>
    <property type="project" value="UniProtKB-SubCell"/>
</dbReference>
<dbReference type="GO" id="GO:0003723">
    <property type="term" value="F:RNA binding"/>
    <property type="evidence" value="ECO:0007669"/>
    <property type="project" value="UniProtKB-KW"/>
</dbReference>
<dbReference type="GO" id="GO:0006397">
    <property type="term" value="P:mRNA processing"/>
    <property type="evidence" value="ECO:0007669"/>
    <property type="project" value="UniProtKB-KW"/>
</dbReference>
<dbReference type="GO" id="GO:0008380">
    <property type="term" value="P:RNA splicing"/>
    <property type="evidence" value="ECO:0007669"/>
    <property type="project" value="UniProtKB-UniRule"/>
</dbReference>
<dbReference type="GO" id="GO:0008033">
    <property type="term" value="P:tRNA processing"/>
    <property type="evidence" value="ECO:0007669"/>
    <property type="project" value="UniProtKB-KW"/>
</dbReference>
<dbReference type="HAMAP" id="MF_01390">
    <property type="entry name" value="MatK"/>
    <property type="match status" value="1"/>
</dbReference>
<dbReference type="InterPro" id="IPR024937">
    <property type="entry name" value="Domain_X"/>
</dbReference>
<dbReference type="InterPro" id="IPR002866">
    <property type="entry name" value="Maturase_MatK"/>
</dbReference>
<dbReference type="InterPro" id="IPR024942">
    <property type="entry name" value="Maturase_MatK_N"/>
</dbReference>
<dbReference type="PANTHER" id="PTHR34811">
    <property type="entry name" value="MATURASE K"/>
    <property type="match status" value="1"/>
</dbReference>
<dbReference type="PANTHER" id="PTHR34811:SF1">
    <property type="entry name" value="MATURASE K"/>
    <property type="match status" value="1"/>
</dbReference>
<dbReference type="Pfam" id="PF01348">
    <property type="entry name" value="Intron_maturas2"/>
    <property type="match status" value="1"/>
</dbReference>
<dbReference type="Pfam" id="PF01824">
    <property type="entry name" value="MatK_N"/>
    <property type="match status" value="1"/>
</dbReference>